<organism>
    <name type="scientific">Alocasia macrorrhizos</name>
    <name type="common">Giant taro</name>
    <name type="synonym">Arum macrorrhizon</name>
    <dbReference type="NCBI Taxonomy" id="4456"/>
    <lineage>
        <taxon>Eukaryota</taxon>
        <taxon>Viridiplantae</taxon>
        <taxon>Streptophyta</taxon>
        <taxon>Embryophyta</taxon>
        <taxon>Tracheophyta</taxon>
        <taxon>Spermatophyta</taxon>
        <taxon>Magnoliopsida</taxon>
        <taxon>Liliopsida</taxon>
        <taxon>Araceae</taxon>
        <taxon>Aroideae</taxon>
        <taxon>Colocasieae</taxon>
        <taxon>Alocasia</taxon>
    </lineage>
</organism>
<feature type="chain" id="PRO_0000189297" description="Ferredoxin-A">
    <location>
        <begin position="1"/>
        <end position="97"/>
    </location>
</feature>
<feature type="domain" description="2Fe-2S ferredoxin-type" evidence="1">
    <location>
        <begin position="3"/>
        <end position="93"/>
    </location>
</feature>
<feature type="binding site" evidence="1">
    <location>
        <position position="39"/>
    </location>
    <ligand>
        <name>[2Fe-2S] cluster</name>
        <dbReference type="ChEBI" id="CHEBI:190135"/>
    </ligand>
</feature>
<feature type="binding site" evidence="1">
    <location>
        <position position="44"/>
    </location>
    <ligand>
        <name>[2Fe-2S] cluster</name>
        <dbReference type="ChEBI" id="CHEBI:190135"/>
    </ligand>
</feature>
<feature type="binding site" evidence="1">
    <location>
        <position position="47"/>
    </location>
    <ligand>
        <name>[2Fe-2S] cluster</name>
        <dbReference type="ChEBI" id="CHEBI:190135"/>
    </ligand>
</feature>
<feature type="binding site" evidence="1">
    <location>
        <position position="77"/>
    </location>
    <ligand>
        <name>[2Fe-2S] cluster</name>
        <dbReference type="ChEBI" id="CHEBI:190135"/>
    </ligand>
</feature>
<feature type="sequence variant">
    <original>D</original>
    <variation>E</variation>
    <location>
        <position position="17"/>
    </location>
</feature>
<comment type="function">
    <text>Ferredoxins are iron-sulfur proteins that transfer electrons in a wide variety of metabolic reactions.</text>
</comment>
<comment type="cofactor">
    <cofactor>
        <name>[2Fe-2S] cluster</name>
        <dbReference type="ChEBI" id="CHEBI:190135"/>
    </cofactor>
    <text>Binds 1 [2Fe-2S] cluster.</text>
</comment>
<comment type="subcellular location">
    <subcellularLocation>
        <location>Plastid</location>
        <location>Chloroplast</location>
    </subcellularLocation>
</comment>
<comment type="similarity">
    <text evidence="2">Belongs to the 2Fe2S plant-type ferredoxin family.</text>
</comment>
<name>FERA_ALOMA</name>
<reference key="1">
    <citation type="journal article" date="1992" name="Protein Seq. Data Anal.">
        <title>Amino acid sequences of ferredoxins from Alocasia macrorrhiza Schott in Papua New Guinea.</title>
        <authorList>
            <person name="Wada K."/>
            <person name="Sakai H."/>
            <person name="Masui R."/>
            <person name="Ihara M."/>
            <person name="Matsubara H."/>
        </authorList>
    </citation>
    <scope>PROTEIN SEQUENCE</scope>
    <source>
        <tissue>Leaf</tissue>
    </source>
</reference>
<sequence>ATYKVKLVTPQGQQEFDCPDDVYILDQAEEEGIDLPYSCRAGSCSSCAGKVKQGEVDQSDGSFLDDEQMEQGWVLTCVAFPTSDVVIETHKEEELTA</sequence>
<evidence type="ECO:0000255" key="1">
    <source>
        <dbReference type="PROSITE-ProRule" id="PRU00465"/>
    </source>
</evidence>
<evidence type="ECO:0000305" key="2"/>
<protein>
    <recommendedName>
        <fullName>Ferredoxin-A</fullName>
        <shortName>Fd A</shortName>
    </recommendedName>
</protein>
<keyword id="KW-0001">2Fe-2S</keyword>
<keyword id="KW-0150">Chloroplast</keyword>
<keyword id="KW-0903">Direct protein sequencing</keyword>
<keyword id="KW-0249">Electron transport</keyword>
<keyword id="KW-0408">Iron</keyword>
<keyword id="KW-0411">Iron-sulfur</keyword>
<keyword id="KW-0479">Metal-binding</keyword>
<keyword id="KW-0934">Plastid</keyword>
<keyword id="KW-0813">Transport</keyword>
<accession>P81372</accession>
<proteinExistence type="evidence at protein level"/>
<dbReference type="PIR" id="S28198">
    <property type="entry name" value="S28198"/>
</dbReference>
<dbReference type="SMR" id="P81372"/>
<dbReference type="GO" id="GO:0009570">
    <property type="term" value="C:chloroplast stroma"/>
    <property type="evidence" value="ECO:0007669"/>
    <property type="project" value="TreeGrafter"/>
</dbReference>
<dbReference type="GO" id="GO:0051537">
    <property type="term" value="F:2 iron, 2 sulfur cluster binding"/>
    <property type="evidence" value="ECO:0007669"/>
    <property type="project" value="UniProtKB-KW"/>
</dbReference>
<dbReference type="GO" id="GO:0009055">
    <property type="term" value="F:electron transfer activity"/>
    <property type="evidence" value="ECO:0007669"/>
    <property type="project" value="InterPro"/>
</dbReference>
<dbReference type="GO" id="GO:0046872">
    <property type="term" value="F:metal ion binding"/>
    <property type="evidence" value="ECO:0007669"/>
    <property type="project" value="UniProtKB-KW"/>
</dbReference>
<dbReference type="GO" id="GO:0022900">
    <property type="term" value="P:electron transport chain"/>
    <property type="evidence" value="ECO:0007669"/>
    <property type="project" value="InterPro"/>
</dbReference>
<dbReference type="CDD" id="cd00207">
    <property type="entry name" value="fer2"/>
    <property type="match status" value="1"/>
</dbReference>
<dbReference type="FunFam" id="3.10.20.30:FF:000014">
    <property type="entry name" value="Ferredoxin"/>
    <property type="match status" value="1"/>
</dbReference>
<dbReference type="Gene3D" id="3.10.20.30">
    <property type="match status" value="1"/>
</dbReference>
<dbReference type="InterPro" id="IPR036010">
    <property type="entry name" value="2Fe-2S_ferredoxin-like_sf"/>
</dbReference>
<dbReference type="InterPro" id="IPR001041">
    <property type="entry name" value="2Fe-2S_ferredoxin-type"/>
</dbReference>
<dbReference type="InterPro" id="IPR006058">
    <property type="entry name" value="2Fe2S_fd_BS"/>
</dbReference>
<dbReference type="InterPro" id="IPR012675">
    <property type="entry name" value="Beta-grasp_dom_sf"/>
</dbReference>
<dbReference type="InterPro" id="IPR010241">
    <property type="entry name" value="Fd_pln"/>
</dbReference>
<dbReference type="NCBIfam" id="TIGR02008">
    <property type="entry name" value="fdx_plant"/>
    <property type="match status" value="1"/>
</dbReference>
<dbReference type="PANTHER" id="PTHR43112">
    <property type="entry name" value="FERREDOXIN"/>
    <property type="match status" value="1"/>
</dbReference>
<dbReference type="PANTHER" id="PTHR43112:SF3">
    <property type="entry name" value="FERREDOXIN-2, CHLOROPLASTIC"/>
    <property type="match status" value="1"/>
</dbReference>
<dbReference type="Pfam" id="PF00111">
    <property type="entry name" value="Fer2"/>
    <property type="match status" value="1"/>
</dbReference>
<dbReference type="SUPFAM" id="SSF54292">
    <property type="entry name" value="2Fe-2S ferredoxin-like"/>
    <property type="match status" value="1"/>
</dbReference>
<dbReference type="PROSITE" id="PS00197">
    <property type="entry name" value="2FE2S_FER_1"/>
    <property type="match status" value="1"/>
</dbReference>
<dbReference type="PROSITE" id="PS51085">
    <property type="entry name" value="2FE2S_FER_2"/>
    <property type="match status" value="1"/>
</dbReference>